<name>ENV_IPMAE</name>
<proteinExistence type="evidence at transcript level"/>
<evidence type="ECO:0000250" key="1"/>
<evidence type="ECO:0000255" key="2"/>
<gene>
    <name type="primary">env</name>
</gene>
<feature type="signal peptide" evidence="2">
    <location>
        <begin position="1"/>
        <end position="28"/>
    </location>
</feature>
<feature type="chain" id="PRO_0000040733" description="Envelope glycoprotein">
    <location>
        <begin position="29"/>
        <end position="584"/>
    </location>
</feature>
<feature type="chain" id="PRO_0000040734" description="Surface protein" evidence="1">
    <location>
        <begin position="29"/>
        <end position="362"/>
    </location>
</feature>
<feature type="chain" id="PRO_0000040735" description="Transmembrane protein" evidence="1">
    <location>
        <begin position="363"/>
        <end position="584"/>
    </location>
</feature>
<feature type="topological domain" description="Extracellular" evidence="2">
    <location>
        <begin position="29"/>
        <end position="527"/>
    </location>
</feature>
<feature type="transmembrane region" description="Helical" evidence="2">
    <location>
        <begin position="528"/>
        <end position="548"/>
    </location>
</feature>
<feature type="topological domain" description="Cytoplasmic" evidence="2">
    <location>
        <begin position="549"/>
        <end position="584"/>
    </location>
</feature>
<feature type="region of interest" description="Fusion peptide" evidence="1">
    <location>
        <begin position="364"/>
        <end position="384"/>
    </location>
</feature>
<feature type="coiled-coil region" evidence="2">
    <location>
        <begin position="391"/>
        <end position="441"/>
    </location>
</feature>
<feature type="coiled-coil region" evidence="2">
    <location>
        <begin position="477"/>
        <end position="513"/>
    </location>
</feature>
<feature type="site" description="Cleavage; by host" evidence="1">
    <location>
        <begin position="362"/>
        <end position="363"/>
    </location>
</feature>
<feature type="glycosylation site" description="N-linked (GlcNAc...) asparagine; by host" evidence="2">
    <location>
        <position position="58"/>
    </location>
</feature>
<feature type="glycosylation site" description="N-linked (GlcNAc...) asparagine; by host" evidence="2">
    <location>
        <position position="77"/>
    </location>
</feature>
<feature type="glycosylation site" description="N-linked (GlcNAc...) asparagine; by host" evidence="2">
    <location>
        <position position="98"/>
    </location>
</feature>
<feature type="glycosylation site" description="N-linked (GlcNAc...) asparagine; by host" evidence="2">
    <location>
        <position position="129"/>
    </location>
</feature>
<feature type="glycosylation site" description="N-linked (GlcNAc...) asparagine; by host" evidence="2">
    <location>
        <position position="140"/>
    </location>
</feature>
<feature type="glycosylation site" description="N-linked (GlcNAc...) asparagine; by host" evidence="2">
    <location>
        <position position="147"/>
    </location>
</feature>
<feature type="glycosylation site" description="N-linked (GlcNAc...) asparagine; by host" evidence="2">
    <location>
        <position position="230"/>
    </location>
</feature>
<feature type="glycosylation site" description="N-linked (GlcNAc...) asparagine; by host" evidence="2">
    <location>
        <position position="276"/>
    </location>
</feature>
<feature type="glycosylation site" description="N-linked (GlcNAc...) asparagine; by host" evidence="2">
    <location>
        <position position="285"/>
    </location>
</feature>
<feature type="glycosylation site" description="N-linked (GlcNAc...) asparagine; by host" evidence="2">
    <location>
        <position position="311"/>
    </location>
</feature>
<feature type="glycosylation site" description="N-linked (GlcNAc...) asparagine; by host" evidence="2">
    <location>
        <position position="319"/>
    </location>
</feature>
<feature type="glycosylation site" description="N-linked (GlcNAc...) asparagine; by host" evidence="2">
    <location>
        <position position="463"/>
    </location>
</feature>
<feature type="glycosylation site" description="N-linked (GlcNAc...) asparagine; by host" evidence="2">
    <location>
        <position position="469"/>
    </location>
</feature>
<feature type="glycosylation site" description="N-linked (GlcNAc...) asparagine; by host" evidence="2">
    <location>
        <position position="481"/>
    </location>
</feature>
<feature type="glycosylation site" description="N-linked (GlcNAc...) asparagine; by host" evidence="2">
    <location>
        <position position="501"/>
    </location>
</feature>
<protein>
    <recommendedName>
        <fullName>Envelope glycoprotein</fullName>
    </recommendedName>
    <alternativeName>
        <fullName>Env polyprotein</fullName>
    </alternativeName>
    <component>
        <recommendedName>
            <fullName>Surface protein</fullName>
            <shortName>SU</shortName>
        </recommendedName>
    </component>
    <component>
        <recommendedName>
            <fullName>Transmembrane protein</fullName>
            <shortName>TM</shortName>
        </recommendedName>
    </component>
</protein>
<comment type="function">
    <text evidence="1">The surface protein (SU) attaches the virus to the host cell by binding to its receptor. This interaction triggers the refolding of the transmembrane protein (TM) and is thought to activate its fusogenic potential by unmasking its fusion peptide. Fusion occurs at the host cell plasma membrane (By similarity).</text>
</comment>
<comment type="function">
    <text evidence="1">The transmembrane protein (TM) acts as a class I viral fusion protein. Under the current model, the protein has at least 3 conformational states: pre-fusion native state, pre-hairpin intermediate state, and post-fusion hairpin state. During viral and target cell membrane fusion, the coiled coil regions (heptad repeats) assume a trimer-of-hairpins structure, positioning the fusion peptide in close proximity to the C-terminal region of the ectodomain. The formation of this structure appears to drive apposition and subsequent fusion of viral and target cell membranes. Membranes fusion leads to delivery of the nucleocapsid into the cytoplasm (By similarity).</text>
</comment>
<comment type="subunit">
    <text evidence="1">The mature envelope protein (Env) consists of a trimer of SU-TM heterodimers attached by noncovalent interactions or by a labile interchain disulfide bond.</text>
</comment>
<comment type="subcellular location">
    <molecule>Transmembrane protein</molecule>
    <subcellularLocation>
        <location evidence="1">Virion membrane</location>
        <topology evidence="1">Single-pass type I membrane protein</topology>
    </subcellularLocation>
    <subcellularLocation>
        <location evidence="1">Host cell membrane</location>
        <topology evidence="1">Single-pass type I membrane protein</topology>
    </subcellularLocation>
</comment>
<comment type="subcellular location">
    <molecule>Surface protein</molecule>
    <subcellularLocation>
        <location>Virion membrane</location>
        <topology>Peripheral membrane protein</topology>
    </subcellularLocation>
    <subcellularLocation>
        <location evidence="1">Host cell membrane</location>
        <topology evidence="1">Peripheral membrane protein</topology>
    </subcellularLocation>
    <text evidence="1">The surface protein is not anchored to the viral envelope, but associates with the extravirion surface through its binding to TM. Both proteins are thought to be concentrated at the site of budding and incorporated into the virions possibly by contacts between the cytoplasmic tail of Env and the N-terminus of Gag (By similarity).</text>
</comment>
<comment type="PTM">
    <text evidence="1">Specific enzymatic cleavages in vivo yield mature proteins. Envelope glycoproteins are synthesized as an inactive precursor that is N-glycosylated and processed likely by host cell furin or by a furin-like protease in the Golgi to yield the mature SU and TM proteins. The cleavage site between SU and TM requires the minimal sequence [KR]-X-[KR]-R (By similarity).</text>
</comment>
<comment type="miscellaneous">
    <text>Readthrough of three terminators occurs: UGA between codons for Thr-71 and Ala-72, UGA between codons for His-110 and Arg-111, and UAA between codons for Val-392 and Ser-393.</text>
</comment>
<comment type="miscellaneous">
    <text>This particle is a defective retrovirus.</text>
</comment>
<organismHost>
    <name type="scientific">Mus musculus</name>
    <name type="common">Mouse</name>
    <dbReference type="NCBI Taxonomy" id="10090"/>
</organismHost>
<accession>P31789</accession>
<sequence>MVQKMLTSRGLFLILTMLNLSQVPSIMGEQRWAILSTFPKPMPVRHDAIVFPKFFTTNKTVDLPYLLYDPTAPLGENRSLLEQGSLCFQINGPGNCINLTARALGKFNEHRGWVSTTQDTSNVEITFTNRTFWQEVNWVNGTFLPPNFSDKEHLHQPKIAPHCSLEDEGLILPWSDCQSSIIRWVDQSKTFSFSPNMIDDPEKEFVMKKGLFIQDFRMHPFHKWVLCGVNGSCTELNPLIFIQGGAVGKASFTGISRFAQYWGIHDASQDSYGYTNTSVEITGFNKTLVNQINYPSTPVCVYPPFLFILSNDSFEVCSNDSCWISQCWDVTKNTRAMVARIPRWIPVPVETPSTLSMFRQKRDFGITAAMIIAISASAAAATAAGYAMVSAVSGTKLNQLSADLADAITVQTSASTKLKGGLMILNQCLDLAEEQIGVLHQMAQLGCERKLEALCITSVQYENFTYAANLSRQLSLYLAGNWSERFDETLEALIAAVLKINSTRMDLSLTEGLSSWISSAFSYFKEWVGVGLFGVATCCGLVVMLWLVCKLRTQQTRDKVVITQALAAIEQGASPEIWLSMLKN</sequence>
<keyword id="KW-0165">Cleavage on pair of basic residues</keyword>
<keyword id="KW-0175">Coiled coil</keyword>
<keyword id="KW-1015">Disulfide bond</keyword>
<keyword id="KW-1169">Fusion of virus membrane with host cell membrane</keyword>
<keyword id="KW-1168">Fusion of virus membrane with host membrane</keyword>
<keyword id="KW-0325">Glycoprotein</keyword>
<keyword id="KW-1032">Host cell membrane</keyword>
<keyword id="KW-1043">Host membrane</keyword>
<keyword id="KW-0945">Host-virus interaction</keyword>
<keyword id="KW-0472">Membrane</keyword>
<keyword id="KW-0732">Signal</keyword>
<keyword id="KW-0812">Transmembrane</keyword>
<keyword id="KW-1133">Transmembrane helix</keyword>
<keyword id="KW-1161">Viral attachment to host cell</keyword>
<keyword id="KW-0261">Viral envelope protein</keyword>
<keyword id="KW-1162">Viral penetration into host cytoplasm</keyword>
<keyword id="KW-0946">Virion</keyword>
<keyword id="KW-1160">Virus entry into host cell</keyword>
<organism>
    <name type="scientific">Mouse intracisternal a-particle MIAE</name>
    <name type="common">IAP-MIAE</name>
    <dbReference type="NCBI Taxonomy" id="11932"/>
    <lineage>
        <taxon>Viruses</taxon>
        <taxon>Riboviria</taxon>
        <taxon>Pararnavirae</taxon>
        <taxon>Artverviricota</taxon>
        <taxon>Revtraviricetes</taxon>
        <taxon>Ortervirales</taxon>
        <taxon>Retroviridae</taxon>
        <taxon>Intracisternal A-particles</taxon>
    </lineage>
</organism>
<dbReference type="EMBL" id="M73818">
    <property type="status" value="NOT_ANNOTATED_CDS"/>
    <property type="molecule type" value="mRNA"/>
</dbReference>
<dbReference type="PIR" id="A41305">
    <property type="entry name" value="VCMSIA"/>
</dbReference>
<dbReference type="GlyCosmos" id="P31789">
    <property type="glycosylation" value="15 sites, No reported glycans"/>
</dbReference>
<dbReference type="GO" id="GO:0020002">
    <property type="term" value="C:host cell plasma membrane"/>
    <property type="evidence" value="ECO:0007669"/>
    <property type="project" value="UniProtKB-SubCell"/>
</dbReference>
<dbReference type="GO" id="GO:0016020">
    <property type="term" value="C:membrane"/>
    <property type="evidence" value="ECO:0007669"/>
    <property type="project" value="UniProtKB-KW"/>
</dbReference>
<dbReference type="GO" id="GO:0019031">
    <property type="term" value="C:viral envelope"/>
    <property type="evidence" value="ECO:0007669"/>
    <property type="project" value="UniProtKB-KW"/>
</dbReference>
<dbReference type="GO" id="GO:0055036">
    <property type="term" value="C:virion membrane"/>
    <property type="evidence" value="ECO:0007669"/>
    <property type="project" value="UniProtKB-SubCell"/>
</dbReference>
<dbReference type="GO" id="GO:0019064">
    <property type="term" value="P:fusion of virus membrane with host plasma membrane"/>
    <property type="evidence" value="ECO:0007669"/>
    <property type="project" value="UniProtKB-KW"/>
</dbReference>
<dbReference type="GO" id="GO:0046718">
    <property type="term" value="P:symbiont entry into host cell"/>
    <property type="evidence" value="ECO:0007669"/>
    <property type="project" value="UniProtKB-KW"/>
</dbReference>
<dbReference type="GO" id="GO:0019062">
    <property type="term" value="P:virion attachment to host cell"/>
    <property type="evidence" value="ECO:0007669"/>
    <property type="project" value="UniProtKB-KW"/>
</dbReference>
<dbReference type="InterPro" id="IPR053368">
    <property type="entry name" value="Viral_Envelope_Glycoprotein"/>
</dbReference>
<dbReference type="PANTHER" id="PTHR37874:SF2">
    <property type="entry name" value="GENE 8113-RELATED"/>
    <property type="match status" value="1"/>
</dbReference>
<dbReference type="PANTHER" id="PTHR37874">
    <property type="entry name" value="RIKEN CDNA 1500011B03 GENE-RELATED"/>
    <property type="match status" value="1"/>
</dbReference>
<reference key="1">
    <citation type="journal article" date="1991" name="J. Virol.">
        <title>cDNA sequence and genomic characterization of intracisternal A-particle-related retroviral elements containing an envelope gene.</title>
        <authorList>
            <person name="Reuss F.U."/>
            <person name="Schaller H.C."/>
        </authorList>
    </citation>
    <scope>NUCLEOTIDE SEQUENCE [MRNA]</scope>
</reference>